<proteinExistence type="predicted"/>
<accession>Q57833</accession>
<organism>
    <name type="scientific">Methanocaldococcus jannaschii (strain ATCC 43067 / DSM 2661 / JAL-1 / JCM 10045 / NBRC 100440)</name>
    <name type="common">Methanococcus jannaschii</name>
    <dbReference type="NCBI Taxonomy" id="243232"/>
    <lineage>
        <taxon>Archaea</taxon>
        <taxon>Methanobacteriati</taxon>
        <taxon>Methanobacteriota</taxon>
        <taxon>Methanomada group</taxon>
        <taxon>Methanococci</taxon>
        <taxon>Methanococcales</taxon>
        <taxon>Methanocaldococcaceae</taxon>
        <taxon>Methanocaldococcus</taxon>
    </lineage>
</organism>
<feature type="chain" id="PRO_0000106850" description="Uncharacterized protein MJ0388">
    <location>
        <begin position="1"/>
        <end position="207"/>
    </location>
</feature>
<keyword id="KW-1185">Reference proteome</keyword>
<sequence length="207" mass="24118">MRKIISSKVSCDEELLELCERLSRMDIDCTIESKGNRVRVYVFGYDKDSLKXNYRTIREVMEKVKRKYQKDDEGLYKYPLFELKYPVNKNLIIDALKTLGYKVIYLEDENAIKTNVDINKFNEILGELHELSQELRFSNLGSKPVKNLVVLVSYITKKPVDDVIEEALEKGFFREEEGRIVLNKDINLAKKALLEGEDGDKDIGEER</sequence>
<name>Y388_METJA</name>
<gene>
    <name type="ordered locus">MJ0388</name>
</gene>
<protein>
    <recommendedName>
        <fullName>Uncharacterized protein MJ0388</fullName>
    </recommendedName>
</protein>
<reference key="1">
    <citation type="journal article" date="1996" name="Science">
        <title>Complete genome sequence of the methanogenic archaeon, Methanococcus jannaschii.</title>
        <authorList>
            <person name="Bult C.J."/>
            <person name="White O."/>
            <person name="Olsen G.J."/>
            <person name="Zhou L."/>
            <person name="Fleischmann R.D."/>
            <person name="Sutton G.G."/>
            <person name="Blake J.A."/>
            <person name="FitzGerald L.M."/>
            <person name="Clayton R.A."/>
            <person name="Gocayne J.D."/>
            <person name="Kerlavage A.R."/>
            <person name="Dougherty B.A."/>
            <person name="Tomb J.-F."/>
            <person name="Adams M.D."/>
            <person name="Reich C.I."/>
            <person name="Overbeek R."/>
            <person name="Kirkness E.F."/>
            <person name="Weinstock K.G."/>
            <person name="Merrick J.M."/>
            <person name="Glodek A."/>
            <person name="Scott J.L."/>
            <person name="Geoghagen N.S.M."/>
            <person name="Weidman J.F."/>
            <person name="Fuhrmann J.L."/>
            <person name="Nguyen D."/>
            <person name="Utterback T.R."/>
            <person name="Kelley J.M."/>
            <person name="Peterson J.D."/>
            <person name="Sadow P.W."/>
            <person name="Hanna M.C."/>
            <person name="Cotton M.D."/>
            <person name="Roberts K.M."/>
            <person name="Hurst M.A."/>
            <person name="Kaine B.P."/>
            <person name="Borodovsky M."/>
            <person name="Klenk H.-P."/>
            <person name="Fraser C.M."/>
            <person name="Smith H.O."/>
            <person name="Woese C.R."/>
            <person name="Venter J.C."/>
        </authorList>
    </citation>
    <scope>NUCLEOTIDE SEQUENCE [LARGE SCALE GENOMIC DNA]</scope>
    <source>
        <strain>ATCC 43067 / DSM 2661 / JAL-1 / JCM 10045 / NBRC 100440</strain>
    </source>
</reference>
<dbReference type="EMBL" id="L77117">
    <property type="protein sequence ID" value="AAB98374.1"/>
    <property type="molecule type" value="Genomic_DNA"/>
</dbReference>
<dbReference type="PIR" id="D64348">
    <property type="entry name" value="D64348"/>
</dbReference>
<dbReference type="RefSeq" id="WP_010869887.1">
    <property type="nucleotide sequence ID" value="NC_000909.1"/>
</dbReference>
<dbReference type="STRING" id="243232.MJ_0388"/>
<dbReference type="PaxDb" id="243232-MJ_0388"/>
<dbReference type="EnsemblBacteria" id="AAB98374">
    <property type="protein sequence ID" value="AAB98374"/>
    <property type="gene ID" value="MJ_0388"/>
</dbReference>
<dbReference type="GeneID" id="1451245"/>
<dbReference type="KEGG" id="mja:MJ_0388"/>
<dbReference type="eggNOG" id="arCOG00908">
    <property type="taxonomic scope" value="Archaea"/>
</dbReference>
<dbReference type="HOGENOM" id="CLU_1335063_0_0_2"/>
<dbReference type="InParanoid" id="Q57833"/>
<dbReference type="OrthoDB" id="65057at2157"/>
<dbReference type="PhylomeDB" id="Q57833"/>
<dbReference type="Proteomes" id="UP000000805">
    <property type="component" value="Chromosome"/>
</dbReference>
<dbReference type="InterPro" id="IPR019202">
    <property type="entry name" value="DUF2067"/>
</dbReference>
<dbReference type="Pfam" id="PF09840">
    <property type="entry name" value="DUF2067"/>
    <property type="match status" value="1"/>
</dbReference>